<organism>
    <name type="scientific">Margaritifera margaritifera</name>
    <name type="common">Freshwater pearl mussel</name>
    <dbReference type="NCBI Taxonomy" id="102329"/>
    <lineage>
        <taxon>Eukaryota</taxon>
        <taxon>Metazoa</taxon>
        <taxon>Spiralia</taxon>
        <taxon>Lophotrochozoa</taxon>
        <taxon>Mollusca</taxon>
        <taxon>Bivalvia</taxon>
        <taxon>Autobranchia</taxon>
        <taxon>Pteriomorphia</taxon>
        <taxon>Pterioida</taxon>
        <taxon>Pterioidea</taxon>
        <taxon>Pteriidae</taxon>
        <taxon>Pinctada</taxon>
    </lineage>
</organism>
<keyword id="KW-0903">Direct protein sequencing</keyword>
<keyword id="KW-1015">Disulfide bond</keyword>
<keyword id="KW-0646">Protease inhibitor</keyword>
<keyword id="KW-0677">Repeat</keyword>
<keyword id="KW-0964">Secreted</keyword>
<keyword id="KW-0722">Serine protease inhibitor</keyword>
<keyword id="KW-0732">Signal</keyword>
<name>KCP4_PINMG</name>
<protein>
    <recommendedName>
        <fullName>BPTI/Kunitz domain-containing protein 4</fullName>
    </recommendedName>
    <alternativeName>
        <fullName>Nacre serine protease inhibitor 3</fullName>
        <shortName>NSPI3</shortName>
    </alternativeName>
</protein>
<sequence length="198" mass="22096">MNLLVFFVYLXVCVIGSHSIXGSQQLSTKKCGGAICAMACTYGFVLDKDGCPICKCRDAPCPLVKCLPCKYGYVIDDNGCQTCECKPLDCGLVCLIYCPYGNIPDERGCPTCFCRPRPCKELECEKKCRNNVLDEIGCPTCKCKECLEPKKVGPCRALIPRYFYDVWSGKCKKFYWGGCQANGNNFKRKSQCCKRCKS</sequence>
<feature type="signal peptide" evidence="1">
    <location>
        <begin position="1"/>
        <end position="19"/>
    </location>
</feature>
<feature type="chain" id="PRO_0000417940" description="BPTI/Kunitz domain-containing protein 4" evidence="1">
    <location>
        <begin position="20"/>
        <end position="198"/>
    </location>
</feature>
<feature type="domain" description="Antistasin-like 1" evidence="3">
    <location>
        <begin position="31"/>
        <end position="56"/>
    </location>
</feature>
<feature type="domain" description="Antistasin-like 2" evidence="3">
    <location>
        <begin position="56"/>
        <end position="85"/>
    </location>
</feature>
<feature type="domain" description="Antistasin-like 3" evidence="3">
    <location>
        <begin position="85"/>
        <end position="114"/>
    </location>
</feature>
<feature type="domain" description="Antistasin-like 4" evidence="3">
    <location>
        <begin position="114"/>
        <end position="143"/>
    </location>
</feature>
<feature type="domain" description="BPTI/Kunitz inhibitor" evidence="2">
    <location>
        <begin position="146"/>
        <end position="196"/>
    </location>
</feature>
<feature type="disulfide bond" evidence="2">
    <location>
        <begin position="146"/>
        <end position="196"/>
    </location>
</feature>
<feature type="disulfide bond" evidence="2">
    <location>
        <begin position="155"/>
        <end position="179"/>
    </location>
</feature>
<feature type="disulfide bond" evidence="2">
    <location>
        <begin position="171"/>
        <end position="192"/>
    </location>
</feature>
<comment type="subcellular location">
    <subcellularLocation>
        <location evidence="4">Secreted</location>
    </subcellularLocation>
</comment>
<comment type="tissue specificity">
    <text evidence="4">Nacreous layer of shell (at protein level).</text>
</comment>
<reference evidence="5" key="1">
    <citation type="journal article" date="2010" name="BMC Genomics">
        <title>Transcriptome and proteome analysis of Pinctada margaritifera calcifying mantle and shell: focus on biomineralization.</title>
        <authorList>
            <person name="Joubert C."/>
            <person name="Piquemal D."/>
            <person name="Marie B."/>
            <person name="Manchon L."/>
            <person name="Pierrat F."/>
            <person name="Zanella-Cleon I."/>
            <person name="Cochennec-Laureau N."/>
            <person name="Gueguen Y."/>
            <person name="Montagnani C."/>
        </authorList>
    </citation>
    <scope>NUCLEOTIDE SEQUENCE [MRNA]</scope>
    <scope>IDENTIFICATION</scope>
    <source>
        <tissue>Mantle</tissue>
    </source>
</reference>
<reference key="2">
    <citation type="journal article" date="2012" name="Proc. Natl. Acad. Sci. U.S.A.">
        <title>Different secretory repertoires control the biomineralization processes of prism and nacre deposition of the pearl oyster shell.</title>
        <authorList>
            <person name="Marie B."/>
            <person name="Joubert C."/>
            <person name="Tayale A."/>
            <person name="Zanella-Cleon I."/>
            <person name="Belliard C."/>
            <person name="Piquemal D."/>
            <person name="Cochennec-Laureau N."/>
            <person name="Marin F."/>
            <person name="Gueguen Y."/>
            <person name="Montagnani C."/>
        </authorList>
    </citation>
    <scope>PROTEIN SEQUENCE OF 130-150 AND 162-170</scope>
    <scope>SUBCELLULAR LOCATION</scope>
    <scope>TISSUE SPECIFICITY</scope>
    <source>
        <tissue>Shell</tissue>
    </source>
</reference>
<accession>H2A0N9</accession>
<dbReference type="EMBL" id="HE610406">
    <property type="protein sequence ID" value="CCE46180.1"/>
    <property type="molecule type" value="mRNA"/>
</dbReference>
<dbReference type="MEROPS" id="I02.959"/>
<dbReference type="GO" id="GO:0005615">
    <property type="term" value="C:extracellular space"/>
    <property type="evidence" value="ECO:0007669"/>
    <property type="project" value="TreeGrafter"/>
</dbReference>
<dbReference type="GO" id="GO:0004867">
    <property type="term" value="F:serine-type endopeptidase inhibitor activity"/>
    <property type="evidence" value="ECO:0007669"/>
    <property type="project" value="UniProtKB-KW"/>
</dbReference>
<dbReference type="CDD" id="cd00109">
    <property type="entry name" value="Kunitz-type"/>
    <property type="match status" value="1"/>
</dbReference>
<dbReference type="Gene3D" id="2.10.22.10">
    <property type="entry name" value="Antistasin, domain 1"/>
    <property type="match status" value="3"/>
</dbReference>
<dbReference type="Gene3D" id="4.10.410.10">
    <property type="entry name" value="Pancreatic trypsin inhibitor Kunitz domain"/>
    <property type="match status" value="1"/>
</dbReference>
<dbReference type="InterPro" id="IPR004094">
    <property type="entry name" value="Antistasin-like"/>
</dbReference>
<dbReference type="InterPro" id="IPR011061">
    <property type="entry name" value="Hirudin/antistatin"/>
</dbReference>
<dbReference type="InterPro" id="IPR002223">
    <property type="entry name" value="Kunitz_BPTI"/>
</dbReference>
<dbReference type="InterPro" id="IPR036880">
    <property type="entry name" value="Kunitz_BPTI_sf"/>
</dbReference>
<dbReference type="InterPro" id="IPR020901">
    <property type="entry name" value="Prtase_inh_Kunz-CS"/>
</dbReference>
<dbReference type="InterPro" id="IPR050098">
    <property type="entry name" value="TFPI/VKTCI-like"/>
</dbReference>
<dbReference type="PANTHER" id="PTHR10083:SF374">
    <property type="entry name" value="BPTI_KUNITZ INHIBITOR DOMAIN-CONTAINING PROTEIN"/>
    <property type="match status" value="1"/>
</dbReference>
<dbReference type="PANTHER" id="PTHR10083">
    <property type="entry name" value="KUNITZ-TYPE PROTEASE INHIBITOR-RELATED"/>
    <property type="match status" value="1"/>
</dbReference>
<dbReference type="Pfam" id="PF02822">
    <property type="entry name" value="Antistasin"/>
    <property type="match status" value="2"/>
</dbReference>
<dbReference type="Pfam" id="PF00014">
    <property type="entry name" value="Kunitz_BPTI"/>
    <property type="match status" value="1"/>
</dbReference>
<dbReference type="PRINTS" id="PR00759">
    <property type="entry name" value="BASICPTASE"/>
</dbReference>
<dbReference type="SMART" id="SM00131">
    <property type="entry name" value="KU"/>
    <property type="match status" value="1"/>
</dbReference>
<dbReference type="SUPFAM" id="SSF57362">
    <property type="entry name" value="BPTI-like"/>
    <property type="match status" value="1"/>
</dbReference>
<dbReference type="SUPFAM" id="SSF57262">
    <property type="entry name" value="Leech antihemostatic proteins"/>
    <property type="match status" value="2"/>
</dbReference>
<dbReference type="PROSITE" id="PS51252">
    <property type="entry name" value="ANTISTASIN"/>
    <property type="match status" value="4"/>
</dbReference>
<dbReference type="PROSITE" id="PS00280">
    <property type="entry name" value="BPTI_KUNITZ_1"/>
    <property type="match status" value="1"/>
</dbReference>
<dbReference type="PROSITE" id="PS50279">
    <property type="entry name" value="BPTI_KUNITZ_2"/>
    <property type="match status" value="1"/>
</dbReference>
<proteinExistence type="evidence at protein level"/>
<evidence type="ECO:0000255" key="1"/>
<evidence type="ECO:0000255" key="2">
    <source>
        <dbReference type="PROSITE-ProRule" id="PRU00031"/>
    </source>
</evidence>
<evidence type="ECO:0000255" key="3">
    <source>
        <dbReference type="PROSITE-ProRule" id="PRU00582"/>
    </source>
</evidence>
<evidence type="ECO:0000269" key="4">
    <source>
    </source>
</evidence>
<evidence type="ECO:0000305" key="5"/>